<comment type="function">
    <text evidence="1">Catalyzes the formation of acetyl phosphate from acetate and ATP. Can also catalyze the reverse reaction.</text>
</comment>
<comment type="catalytic activity">
    <reaction evidence="1">
        <text>acetate + ATP = acetyl phosphate + ADP</text>
        <dbReference type="Rhea" id="RHEA:11352"/>
        <dbReference type="ChEBI" id="CHEBI:22191"/>
        <dbReference type="ChEBI" id="CHEBI:30089"/>
        <dbReference type="ChEBI" id="CHEBI:30616"/>
        <dbReference type="ChEBI" id="CHEBI:456216"/>
        <dbReference type="EC" id="2.7.2.1"/>
    </reaction>
</comment>
<comment type="cofactor">
    <cofactor evidence="1">
        <name>Mg(2+)</name>
        <dbReference type="ChEBI" id="CHEBI:18420"/>
    </cofactor>
    <cofactor evidence="1">
        <name>Mn(2+)</name>
        <dbReference type="ChEBI" id="CHEBI:29035"/>
    </cofactor>
    <text evidence="1">Mg(2+). Can also accept Mn(2+).</text>
</comment>
<comment type="pathway">
    <text evidence="1">Metabolic intermediate biosynthesis; acetyl-CoA biosynthesis; acetyl-CoA from acetate: step 1/2.</text>
</comment>
<comment type="subunit">
    <text evidence="1">Homodimer.</text>
</comment>
<comment type="subcellular location">
    <subcellularLocation>
        <location evidence="1">Cytoplasm</location>
    </subcellularLocation>
</comment>
<comment type="similarity">
    <text evidence="1">Belongs to the acetokinase family.</text>
</comment>
<dbReference type="EC" id="2.7.2.1" evidence="1"/>
<dbReference type="EMBL" id="BA000017">
    <property type="protein sequence ID" value="BAB57873.1"/>
    <property type="molecule type" value="Genomic_DNA"/>
</dbReference>
<dbReference type="RefSeq" id="WP_000040065.1">
    <property type="nucleotide sequence ID" value="NC_002758.2"/>
</dbReference>
<dbReference type="SMR" id="Q931P6"/>
<dbReference type="KEGG" id="sav:SAV1711"/>
<dbReference type="HOGENOM" id="CLU_020352_0_1_9"/>
<dbReference type="PhylomeDB" id="Q931P6"/>
<dbReference type="UniPathway" id="UPA00340">
    <property type="reaction ID" value="UER00458"/>
</dbReference>
<dbReference type="Proteomes" id="UP000002481">
    <property type="component" value="Chromosome"/>
</dbReference>
<dbReference type="GO" id="GO:0005737">
    <property type="term" value="C:cytoplasm"/>
    <property type="evidence" value="ECO:0007669"/>
    <property type="project" value="UniProtKB-SubCell"/>
</dbReference>
<dbReference type="GO" id="GO:0008776">
    <property type="term" value="F:acetate kinase activity"/>
    <property type="evidence" value="ECO:0007669"/>
    <property type="project" value="UniProtKB-UniRule"/>
</dbReference>
<dbReference type="GO" id="GO:0005524">
    <property type="term" value="F:ATP binding"/>
    <property type="evidence" value="ECO:0007669"/>
    <property type="project" value="UniProtKB-KW"/>
</dbReference>
<dbReference type="GO" id="GO:0000287">
    <property type="term" value="F:magnesium ion binding"/>
    <property type="evidence" value="ECO:0007669"/>
    <property type="project" value="UniProtKB-UniRule"/>
</dbReference>
<dbReference type="GO" id="GO:0006083">
    <property type="term" value="P:acetate metabolic process"/>
    <property type="evidence" value="ECO:0007669"/>
    <property type="project" value="TreeGrafter"/>
</dbReference>
<dbReference type="GO" id="GO:0006085">
    <property type="term" value="P:acetyl-CoA biosynthetic process"/>
    <property type="evidence" value="ECO:0007669"/>
    <property type="project" value="UniProtKB-UniRule"/>
</dbReference>
<dbReference type="CDD" id="cd24010">
    <property type="entry name" value="ASKHA_NBD_AcK_PK"/>
    <property type="match status" value="1"/>
</dbReference>
<dbReference type="Gene3D" id="3.30.420.40">
    <property type="match status" value="2"/>
</dbReference>
<dbReference type="HAMAP" id="MF_00020">
    <property type="entry name" value="Acetate_kinase"/>
    <property type="match status" value="1"/>
</dbReference>
<dbReference type="InterPro" id="IPR004372">
    <property type="entry name" value="Ac/propionate_kinase"/>
</dbReference>
<dbReference type="InterPro" id="IPR000890">
    <property type="entry name" value="Aliphatic_acid_kin_short-chain"/>
</dbReference>
<dbReference type="InterPro" id="IPR023865">
    <property type="entry name" value="Aliphatic_acid_kinase_CS"/>
</dbReference>
<dbReference type="InterPro" id="IPR043129">
    <property type="entry name" value="ATPase_NBD"/>
</dbReference>
<dbReference type="NCBIfam" id="TIGR00016">
    <property type="entry name" value="ackA"/>
    <property type="match status" value="1"/>
</dbReference>
<dbReference type="PANTHER" id="PTHR21060">
    <property type="entry name" value="ACETATE KINASE"/>
    <property type="match status" value="1"/>
</dbReference>
<dbReference type="PANTHER" id="PTHR21060:SF15">
    <property type="entry name" value="ACETATE KINASE-RELATED"/>
    <property type="match status" value="1"/>
</dbReference>
<dbReference type="Pfam" id="PF00871">
    <property type="entry name" value="Acetate_kinase"/>
    <property type="match status" value="1"/>
</dbReference>
<dbReference type="PIRSF" id="PIRSF000722">
    <property type="entry name" value="Acetate_prop_kin"/>
    <property type="match status" value="1"/>
</dbReference>
<dbReference type="PRINTS" id="PR00471">
    <property type="entry name" value="ACETATEKNASE"/>
</dbReference>
<dbReference type="SUPFAM" id="SSF53067">
    <property type="entry name" value="Actin-like ATPase domain"/>
    <property type="match status" value="2"/>
</dbReference>
<dbReference type="PROSITE" id="PS01075">
    <property type="entry name" value="ACETATE_KINASE_1"/>
    <property type="match status" value="1"/>
</dbReference>
<dbReference type="PROSITE" id="PS01076">
    <property type="entry name" value="ACETATE_KINASE_2"/>
    <property type="match status" value="1"/>
</dbReference>
<organism>
    <name type="scientific">Staphylococcus aureus (strain Mu50 / ATCC 700699)</name>
    <dbReference type="NCBI Taxonomy" id="158878"/>
    <lineage>
        <taxon>Bacteria</taxon>
        <taxon>Bacillati</taxon>
        <taxon>Bacillota</taxon>
        <taxon>Bacilli</taxon>
        <taxon>Bacillales</taxon>
        <taxon>Staphylococcaceae</taxon>
        <taxon>Staphylococcus</taxon>
    </lineage>
</organism>
<evidence type="ECO:0000255" key="1">
    <source>
        <dbReference type="HAMAP-Rule" id="MF_00020"/>
    </source>
</evidence>
<keyword id="KW-0067">ATP-binding</keyword>
<keyword id="KW-0963">Cytoplasm</keyword>
<keyword id="KW-0418">Kinase</keyword>
<keyword id="KW-0460">Magnesium</keyword>
<keyword id="KW-0479">Metal-binding</keyword>
<keyword id="KW-0547">Nucleotide-binding</keyword>
<keyword id="KW-0808">Transferase</keyword>
<feature type="chain" id="PRO_0000107611" description="Acetate kinase">
    <location>
        <begin position="1"/>
        <end position="400"/>
    </location>
</feature>
<feature type="active site" description="Proton donor/acceptor" evidence="1">
    <location>
        <position position="147"/>
    </location>
</feature>
<feature type="binding site" evidence="1">
    <location>
        <position position="9"/>
    </location>
    <ligand>
        <name>Mg(2+)</name>
        <dbReference type="ChEBI" id="CHEBI:18420"/>
    </ligand>
</feature>
<feature type="binding site" evidence="1">
    <location>
        <position position="16"/>
    </location>
    <ligand>
        <name>ATP</name>
        <dbReference type="ChEBI" id="CHEBI:30616"/>
    </ligand>
</feature>
<feature type="binding site" evidence="1">
    <location>
        <position position="90"/>
    </location>
    <ligand>
        <name>substrate</name>
    </ligand>
</feature>
<feature type="binding site" evidence="1">
    <location>
        <begin position="207"/>
        <end position="211"/>
    </location>
    <ligand>
        <name>ATP</name>
        <dbReference type="ChEBI" id="CHEBI:30616"/>
    </ligand>
</feature>
<feature type="binding site" evidence="1">
    <location>
        <begin position="282"/>
        <end position="284"/>
    </location>
    <ligand>
        <name>ATP</name>
        <dbReference type="ChEBI" id="CHEBI:30616"/>
    </ligand>
</feature>
<feature type="binding site" evidence="1">
    <location>
        <begin position="330"/>
        <end position="334"/>
    </location>
    <ligand>
        <name>ATP</name>
        <dbReference type="ChEBI" id="CHEBI:30616"/>
    </ligand>
</feature>
<feature type="binding site" evidence="1">
    <location>
        <position position="385"/>
    </location>
    <ligand>
        <name>Mg(2+)</name>
        <dbReference type="ChEBI" id="CHEBI:18420"/>
    </ligand>
</feature>
<feature type="site" description="Transition state stabilizer" evidence="1">
    <location>
        <position position="179"/>
    </location>
</feature>
<feature type="site" description="Transition state stabilizer" evidence="1">
    <location>
        <position position="240"/>
    </location>
</feature>
<reference key="1">
    <citation type="journal article" date="2001" name="Lancet">
        <title>Whole genome sequencing of meticillin-resistant Staphylococcus aureus.</title>
        <authorList>
            <person name="Kuroda M."/>
            <person name="Ohta T."/>
            <person name="Uchiyama I."/>
            <person name="Baba T."/>
            <person name="Yuzawa H."/>
            <person name="Kobayashi I."/>
            <person name="Cui L."/>
            <person name="Oguchi A."/>
            <person name="Aoki K."/>
            <person name="Nagai Y."/>
            <person name="Lian J.-Q."/>
            <person name="Ito T."/>
            <person name="Kanamori M."/>
            <person name="Matsumaru H."/>
            <person name="Maruyama A."/>
            <person name="Murakami H."/>
            <person name="Hosoyama A."/>
            <person name="Mizutani-Ui Y."/>
            <person name="Takahashi N.K."/>
            <person name="Sawano T."/>
            <person name="Inoue R."/>
            <person name="Kaito C."/>
            <person name="Sekimizu K."/>
            <person name="Hirakawa H."/>
            <person name="Kuhara S."/>
            <person name="Goto S."/>
            <person name="Yabuzaki J."/>
            <person name="Kanehisa M."/>
            <person name="Yamashita A."/>
            <person name="Oshima K."/>
            <person name="Furuya K."/>
            <person name="Yoshino C."/>
            <person name="Shiba T."/>
            <person name="Hattori M."/>
            <person name="Ogasawara N."/>
            <person name="Hayashi H."/>
            <person name="Hiramatsu K."/>
        </authorList>
    </citation>
    <scope>NUCLEOTIDE SEQUENCE [LARGE SCALE GENOMIC DNA]</scope>
    <source>
        <strain>Mu50 / ATCC 700699</strain>
    </source>
</reference>
<sequence>MSKLILAINAGSSSLKFQLIRMPEEELVTKGLIERIGLKDSIFTIEVNGEKVKTVQDIKDHVEAVDIMLDAFKAHNIINDINDIVGTGHRVVHGGEKFPESVAITDEVEKEIEELSELAPLHNPANLMGIRAFRKLLPNIPHVAIFDTAFHQTMPEKAYLYSLPYHYYKDYGIRKYGFHGTSHKFVSQRAAEMLDKPIEDLRIISCHIGNGASIAAIDGGKSIDTSMGFTPLAGVTMGTRSGNIDPALIPFIMEKTGKTAEQVLEILNKESGLLGLSGTSSDLRDLSEEAESGKARSQMALDVFASKIHKYIGSYAARMHGVDVIVFTAGIGENSVEIRAKVLEGLEFMGVYWDPKKNENLLRGKEGFINYPHSPVKVVVIPTDEESMIARDVMTFGGLK</sequence>
<protein>
    <recommendedName>
        <fullName evidence="1">Acetate kinase</fullName>
        <ecNumber evidence="1">2.7.2.1</ecNumber>
    </recommendedName>
    <alternativeName>
        <fullName evidence="1">Acetokinase</fullName>
    </alternativeName>
</protein>
<proteinExistence type="inferred from homology"/>
<accession>Q931P6</accession>
<gene>
    <name evidence="1" type="primary">ackA</name>
    <name type="ordered locus">SAV1711</name>
</gene>
<name>ACKA_STAAM</name>